<comment type="catalytic activity">
    <reaction>
        <text>beta-D-fructose 1,6-bisphosphate = D-glyceraldehyde 3-phosphate + dihydroxyacetone phosphate</text>
        <dbReference type="Rhea" id="RHEA:14729"/>
        <dbReference type="ChEBI" id="CHEBI:32966"/>
        <dbReference type="ChEBI" id="CHEBI:57642"/>
        <dbReference type="ChEBI" id="CHEBI:59776"/>
        <dbReference type="EC" id="4.1.2.13"/>
    </reaction>
</comment>
<comment type="pathway">
    <text>Carbohydrate degradation; glycolysis; D-glyceraldehyde 3-phosphate and glycerone phosphate from D-glucose: step 4/4.</text>
</comment>
<comment type="subcellular location">
    <subcellularLocation>
        <location>Cytoplasm</location>
    </subcellularLocation>
</comment>
<comment type="similarity">
    <text evidence="2">Belongs to the class I fructose-bisphosphate aldolase family.</text>
</comment>
<organism>
    <name type="scientific">Pisum sativum</name>
    <name type="common">Garden pea</name>
    <name type="synonym">Lathyrus oleraceus</name>
    <dbReference type="NCBI Taxonomy" id="3888"/>
    <lineage>
        <taxon>Eukaryota</taxon>
        <taxon>Viridiplantae</taxon>
        <taxon>Streptophyta</taxon>
        <taxon>Embryophyta</taxon>
        <taxon>Tracheophyta</taxon>
        <taxon>Spermatophyta</taxon>
        <taxon>Magnoliopsida</taxon>
        <taxon>eudicotyledons</taxon>
        <taxon>Gunneridae</taxon>
        <taxon>Pentapetalae</taxon>
        <taxon>rosids</taxon>
        <taxon>fabids</taxon>
        <taxon>Fabales</taxon>
        <taxon>Fabaceae</taxon>
        <taxon>Papilionoideae</taxon>
        <taxon>50 kb inversion clade</taxon>
        <taxon>NPAAA clade</taxon>
        <taxon>Hologalegina</taxon>
        <taxon>IRL clade</taxon>
        <taxon>Fabeae</taxon>
        <taxon>Pisum</taxon>
    </lineage>
</organism>
<evidence type="ECO:0000250" key="1"/>
<evidence type="ECO:0000305" key="2"/>
<sequence length="357" mass="38446">MSAFVGKYADELIKNAKYIATPGKGILAADESTGTIGKRLASINVENIEANRQALRELLFTSPNALQYLSGVILFEETLYQKSSEGKPFVEILQENNVIPGIKVDKGVVELAGTDGETTTQGFDSLGARCQQYYKAGARFAKWRAVLKIGPNEPSELSIQQNAQGLARYAIICQENGLVLFVEPEILTDGSHDIAKCAAVTETVLAACYKALNDQHVLLEGTLLKPNMVTPGSDSPKVSPEVIGEYTVNALRRTVPAAVPGIVFLSGGQSEEQATLNLNAMNKFDVVKPWTLSFSFGRALQQSTLKTWSGKKENVGKAQDVFLARCKANSEATLGKYGGGSGTGLASESLHVKDYKY</sequence>
<dbReference type="EC" id="4.1.2.13"/>
<dbReference type="EMBL" id="X89828">
    <property type="protein sequence ID" value="CAA61946.1"/>
    <property type="molecule type" value="mRNA"/>
</dbReference>
<dbReference type="PIR" id="S58168">
    <property type="entry name" value="S58168"/>
</dbReference>
<dbReference type="SMR" id="P46256"/>
<dbReference type="SABIO-RK" id="P46256"/>
<dbReference type="UniPathway" id="UPA00109">
    <property type="reaction ID" value="UER00183"/>
</dbReference>
<dbReference type="GO" id="GO:0005737">
    <property type="term" value="C:cytoplasm"/>
    <property type="evidence" value="ECO:0007669"/>
    <property type="project" value="UniProtKB-SubCell"/>
</dbReference>
<dbReference type="GO" id="GO:0004332">
    <property type="term" value="F:fructose-bisphosphate aldolase activity"/>
    <property type="evidence" value="ECO:0007669"/>
    <property type="project" value="UniProtKB-EC"/>
</dbReference>
<dbReference type="GO" id="GO:0006096">
    <property type="term" value="P:glycolytic process"/>
    <property type="evidence" value="ECO:0007669"/>
    <property type="project" value="UniProtKB-UniPathway"/>
</dbReference>
<dbReference type="CDD" id="cd00948">
    <property type="entry name" value="FBP_aldolase_I_a"/>
    <property type="match status" value="1"/>
</dbReference>
<dbReference type="FunFam" id="3.20.20.70:FF:000068">
    <property type="entry name" value="Fructose-bisphosphate aldolase"/>
    <property type="match status" value="1"/>
</dbReference>
<dbReference type="Gene3D" id="3.20.20.70">
    <property type="entry name" value="Aldolase class I"/>
    <property type="match status" value="1"/>
</dbReference>
<dbReference type="InterPro" id="IPR029768">
    <property type="entry name" value="Aldolase_I_AS"/>
</dbReference>
<dbReference type="InterPro" id="IPR013785">
    <property type="entry name" value="Aldolase_TIM"/>
</dbReference>
<dbReference type="InterPro" id="IPR000741">
    <property type="entry name" value="FBA_I"/>
</dbReference>
<dbReference type="NCBIfam" id="NF033379">
    <property type="entry name" value="FrucBisAld_I"/>
    <property type="match status" value="1"/>
</dbReference>
<dbReference type="PANTHER" id="PTHR11627">
    <property type="entry name" value="FRUCTOSE-BISPHOSPHATE ALDOLASE"/>
    <property type="match status" value="1"/>
</dbReference>
<dbReference type="Pfam" id="PF00274">
    <property type="entry name" value="Glycolytic"/>
    <property type="match status" value="1"/>
</dbReference>
<dbReference type="SUPFAM" id="SSF51569">
    <property type="entry name" value="Aldolase"/>
    <property type="match status" value="1"/>
</dbReference>
<dbReference type="PROSITE" id="PS00158">
    <property type="entry name" value="ALDOLASE_CLASS_I"/>
    <property type="match status" value="1"/>
</dbReference>
<proteinExistence type="evidence at transcript level"/>
<name>ALF1_PEA</name>
<keyword id="KW-0963">Cytoplasm</keyword>
<keyword id="KW-0324">Glycolysis</keyword>
<keyword id="KW-0456">Lyase</keyword>
<keyword id="KW-0704">Schiff base</keyword>
<protein>
    <recommendedName>
        <fullName>Fructose-bisphosphate aldolase, cytoplasmic isozyme 1</fullName>
        <ecNumber>4.1.2.13</ecNumber>
    </recommendedName>
</protein>
<accession>P46256</accession>
<feature type="chain" id="PRO_0000216923" description="Fructose-bisphosphate aldolase, cytoplasmic isozyme 1">
    <location>
        <begin position="1"/>
        <end position="357"/>
    </location>
</feature>
<feature type="active site" description="Proton acceptor" evidence="1">
    <location>
        <position position="183"/>
    </location>
</feature>
<feature type="active site" description="Schiff-base intermediate with dihydroxyacetone-P" evidence="1">
    <location>
        <position position="225"/>
    </location>
</feature>
<feature type="binding site" evidence="1">
    <location>
        <position position="52"/>
    </location>
    <ligand>
        <name>substrate</name>
    </ligand>
</feature>
<feature type="binding site" evidence="1">
    <location>
        <position position="142"/>
    </location>
    <ligand>
        <name>substrate</name>
    </ligand>
</feature>
<feature type="site" description="Necessary for preference for fructose 1,6-bisphosphate over fructose 1-phosphate" evidence="1">
    <location>
        <position position="357"/>
    </location>
</feature>
<reference key="1">
    <citation type="submission" date="1995-07" db="EMBL/GenBank/DDBJ databases">
        <authorList>
            <person name="Pelzer-Reith B."/>
            <person name="Schnarrenberger C."/>
        </authorList>
    </citation>
    <scope>NUCLEOTIDE SEQUENCE [MRNA]</scope>
    <source>
        <tissue>Leaf</tissue>
    </source>
</reference>